<proteinExistence type="inferred from homology"/>
<feature type="chain" id="PRO_0000299286" description="UPF0473 protein YrzB">
    <location>
        <begin position="1"/>
        <end position="93"/>
    </location>
</feature>
<name>YRZB_BACSU</name>
<gene>
    <name type="primary">yrzB</name>
    <name type="ordered locus">BSU27380</name>
</gene>
<accession>O34828</accession>
<evidence type="ECO:0000305" key="1"/>
<sequence>MEHGEKNITIVDDQGNEQLCEVLFTFENEEFGKSYVLYYPIESKDDEEVEILASSFTPNEDGENGELFPIETDEEWDMIEETLNTFLADEDEE</sequence>
<comment type="similarity">
    <text evidence="1">Belongs to the UPF0473 family.</text>
</comment>
<keyword id="KW-1185">Reference proteome</keyword>
<organism>
    <name type="scientific">Bacillus subtilis (strain 168)</name>
    <dbReference type="NCBI Taxonomy" id="224308"/>
    <lineage>
        <taxon>Bacteria</taxon>
        <taxon>Bacillati</taxon>
        <taxon>Bacillota</taxon>
        <taxon>Bacilli</taxon>
        <taxon>Bacillales</taxon>
        <taxon>Bacillaceae</taxon>
        <taxon>Bacillus</taxon>
    </lineage>
</organism>
<dbReference type="EMBL" id="AL009126">
    <property type="protein sequence ID" value="CAB14680.1"/>
    <property type="molecule type" value="Genomic_DNA"/>
</dbReference>
<dbReference type="PIR" id="A69982">
    <property type="entry name" value="A69982"/>
</dbReference>
<dbReference type="RefSeq" id="NP_390616.1">
    <property type="nucleotide sequence ID" value="NC_000964.3"/>
</dbReference>
<dbReference type="RefSeq" id="WP_003246199.1">
    <property type="nucleotide sequence ID" value="NZ_OZ025638.1"/>
</dbReference>
<dbReference type="FunCoup" id="O34828">
    <property type="interactions" value="22"/>
</dbReference>
<dbReference type="STRING" id="224308.BSU27380"/>
<dbReference type="jPOST" id="O34828"/>
<dbReference type="PaxDb" id="224308-BSU27380"/>
<dbReference type="EnsemblBacteria" id="CAB14680">
    <property type="protein sequence ID" value="CAB14680"/>
    <property type="gene ID" value="BSU_27380"/>
</dbReference>
<dbReference type="GeneID" id="938000"/>
<dbReference type="KEGG" id="bsu:BSU27380"/>
<dbReference type="PATRIC" id="fig|224308.179.peg.2974"/>
<dbReference type="eggNOG" id="COG3906">
    <property type="taxonomic scope" value="Bacteria"/>
</dbReference>
<dbReference type="InParanoid" id="O34828"/>
<dbReference type="OrthoDB" id="2086132at2"/>
<dbReference type="PhylomeDB" id="O34828"/>
<dbReference type="BioCyc" id="BSUB:BSU27380-MONOMER"/>
<dbReference type="Proteomes" id="UP000001570">
    <property type="component" value="Chromosome"/>
</dbReference>
<dbReference type="HAMAP" id="MF_01448">
    <property type="entry name" value="UPF0473"/>
    <property type="match status" value="1"/>
</dbReference>
<dbReference type="InterPro" id="IPR009711">
    <property type="entry name" value="UPF0473"/>
</dbReference>
<dbReference type="NCBIfam" id="NF010215">
    <property type="entry name" value="PRK13678.1-2"/>
    <property type="match status" value="1"/>
</dbReference>
<dbReference type="NCBIfam" id="NF010217">
    <property type="entry name" value="PRK13678.1-4"/>
    <property type="match status" value="1"/>
</dbReference>
<dbReference type="NCBIfam" id="NF010219">
    <property type="entry name" value="PRK13678.2-2"/>
    <property type="match status" value="1"/>
</dbReference>
<dbReference type="NCBIfam" id="NF010221">
    <property type="entry name" value="PRK13678.2-4"/>
    <property type="match status" value="1"/>
</dbReference>
<dbReference type="PANTHER" id="PTHR40066">
    <property type="entry name" value="UPF0473 PROTEIN CBO2561/CLC_2432"/>
    <property type="match status" value="1"/>
</dbReference>
<dbReference type="PANTHER" id="PTHR40066:SF1">
    <property type="entry name" value="UPF0473 PROTEIN CBO2561_CLC_2432"/>
    <property type="match status" value="1"/>
</dbReference>
<dbReference type="Pfam" id="PF06949">
    <property type="entry name" value="DUF1292"/>
    <property type="match status" value="1"/>
</dbReference>
<protein>
    <recommendedName>
        <fullName>UPF0473 protein YrzB</fullName>
    </recommendedName>
</protein>
<reference key="1">
    <citation type="journal article" date="1997" name="Nature">
        <title>The complete genome sequence of the Gram-positive bacterium Bacillus subtilis.</title>
        <authorList>
            <person name="Kunst F."/>
            <person name="Ogasawara N."/>
            <person name="Moszer I."/>
            <person name="Albertini A.M."/>
            <person name="Alloni G."/>
            <person name="Azevedo V."/>
            <person name="Bertero M.G."/>
            <person name="Bessieres P."/>
            <person name="Bolotin A."/>
            <person name="Borchert S."/>
            <person name="Borriss R."/>
            <person name="Boursier L."/>
            <person name="Brans A."/>
            <person name="Braun M."/>
            <person name="Brignell S.C."/>
            <person name="Bron S."/>
            <person name="Brouillet S."/>
            <person name="Bruschi C.V."/>
            <person name="Caldwell B."/>
            <person name="Capuano V."/>
            <person name="Carter N.M."/>
            <person name="Choi S.-K."/>
            <person name="Codani J.-J."/>
            <person name="Connerton I.F."/>
            <person name="Cummings N.J."/>
            <person name="Daniel R.A."/>
            <person name="Denizot F."/>
            <person name="Devine K.M."/>
            <person name="Duesterhoeft A."/>
            <person name="Ehrlich S.D."/>
            <person name="Emmerson P.T."/>
            <person name="Entian K.-D."/>
            <person name="Errington J."/>
            <person name="Fabret C."/>
            <person name="Ferrari E."/>
            <person name="Foulger D."/>
            <person name="Fritz C."/>
            <person name="Fujita M."/>
            <person name="Fujita Y."/>
            <person name="Fuma S."/>
            <person name="Galizzi A."/>
            <person name="Galleron N."/>
            <person name="Ghim S.-Y."/>
            <person name="Glaser P."/>
            <person name="Goffeau A."/>
            <person name="Golightly E.J."/>
            <person name="Grandi G."/>
            <person name="Guiseppi G."/>
            <person name="Guy B.J."/>
            <person name="Haga K."/>
            <person name="Haiech J."/>
            <person name="Harwood C.R."/>
            <person name="Henaut A."/>
            <person name="Hilbert H."/>
            <person name="Holsappel S."/>
            <person name="Hosono S."/>
            <person name="Hullo M.-F."/>
            <person name="Itaya M."/>
            <person name="Jones L.-M."/>
            <person name="Joris B."/>
            <person name="Karamata D."/>
            <person name="Kasahara Y."/>
            <person name="Klaerr-Blanchard M."/>
            <person name="Klein C."/>
            <person name="Kobayashi Y."/>
            <person name="Koetter P."/>
            <person name="Koningstein G."/>
            <person name="Krogh S."/>
            <person name="Kumano M."/>
            <person name="Kurita K."/>
            <person name="Lapidus A."/>
            <person name="Lardinois S."/>
            <person name="Lauber J."/>
            <person name="Lazarevic V."/>
            <person name="Lee S.-M."/>
            <person name="Levine A."/>
            <person name="Liu H."/>
            <person name="Masuda S."/>
            <person name="Mauel C."/>
            <person name="Medigue C."/>
            <person name="Medina N."/>
            <person name="Mellado R.P."/>
            <person name="Mizuno M."/>
            <person name="Moestl D."/>
            <person name="Nakai S."/>
            <person name="Noback M."/>
            <person name="Noone D."/>
            <person name="O'Reilly M."/>
            <person name="Ogawa K."/>
            <person name="Ogiwara A."/>
            <person name="Oudega B."/>
            <person name="Park S.-H."/>
            <person name="Parro V."/>
            <person name="Pohl T.M."/>
            <person name="Portetelle D."/>
            <person name="Porwollik S."/>
            <person name="Prescott A.M."/>
            <person name="Presecan E."/>
            <person name="Pujic P."/>
            <person name="Purnelle B."/>
            <person name="Rapoport G."/>
            <person name="Rey M."/>
            <person name="Reynolds S."/>
            <person name="Rieger M."/>
            <person name="Rivolta C."/>
            <person name="Rocha E."/>
            <person name="Roche B."/>
            <person name="Rose M."/>
            <person name="Sadaie Y."/>
            <person name="Sato T."/>
            <person name="Scanlan E."/>
            <person name="Schleich S."/>
            <person name="Schroeter R."/>
            <person name="Scoffone F."/>
            <person name="Sekiguchi J."/>
            <person name="Sekowska A."/>
            <person name="Seror S.J."/>
            <person name="Serror P."/>
            <person name="Shin B.-S."/>
            <person name="Soldo B."/>
            <person name="Sorokin A."/>
            <person name="Tacconi E."/>
            <person name="Takagi T."/>
            <person name="Takahashi H."/>
            <person name="Takemaru K."/>
            <person name="Takeuchi M."/>
            <person name="Tamakoshi A."/>
            <person name="Tanaka T."/>
            <person name="Terpstra P."/>
            <person name="Tognoni A."/>
            <person name="Tosato V."/>
            <person name="Uchiyama S."/>
            <person name="Vandenbol M."/>
            <person name="Vannier F."/>
            <person name="Vassarotti A."/>
            <person name="Viari A."/>
            <person name="Wambutt R."/>
            <person name="Wedler E."/>
            <person name="Wedler H."/>
            <person name="Weitzenegger T."/>
            <person name="Winters P."/>
            <person name="Wipat A."/>
            <person name="Yamamoto H."/>
            <person name="Yamane K."/>
            <person name="Yasumoto K."/>
            <person name="Yata K."/>
            <person name="Yoshida K."/>
            <person name="Yoshikawa H.-F."/>
            <person name="Zumstein E."/>
            <person name="Yoshikawa H."/>
            <person name="Danchin A."/>
        </authorList>
    </citation>
    <scope>NUCLEOTIDE SEQUENCE [LARGE SCALE GENOMIC DNA]</scope>
    <source>
        <strain>168</strain>
    </source>
</reference>